<gene>
    <name evidence="7" type="primary">aceI</name>
    <name evidence="11" type="ordered locus">A1S_2063</name>
</gene>
<accession>P0DUT9</accession>
<reference key="1">
    <citation type="journal article" date="2007" name="Genes Dev.">
        <title>New insights into Acinetobacter baumannii pathogenesis revealed by high-density pyrosequencing and transposon mutagenesis.</title>
        <authorList>
            <person name="Smith M.G."/>
            <person name="Gianoulis T.A."/>
            <person name="Pukatzki S."/>
            <person name="Mekalanos J.J."/>
            <person name="Ornston L.N."/>
            <person name="Gerstein M."/>
            <person name="Snyder M."/>
        </authorList>
    </citation>
    <scope>NUCLEOTIDE SEQUENCE [LARGE SCALE GENOMIC DNA]</scope>
    <source>
        <strain>ATCC 17978 / DSM 105126 / CIP 53.77 / LMG 1025 / NCDC KC755 / 5377</strain>
    </source>
</reference>
<reference key="2">
    <citation type="journal article" date="2013" name="Proc. Natl. Acad. Sci. U.S.A.">
        <title>Transcriptomic and biochemical analyses identify a family of chlorhexidine efflux proteins.</title>
        <authorList>
            <person name="Hassan K.A."/>
            <person name="Jackson S.M."/>
            <person name="Penesyan A."/>
            <person name="Patching S.G."/>
            <person name="Tetu S.G."/>
            <person name="Eijkelkamp B.A."/>
            <person name="Brown M.H."/>
            <person name="Henderson P.J."/>
            <person name="Paulsen I.T."/>
        </authorList>
    </citation>
    <scope>FUNCTION</scope>
    <scope>SUBCELLULAR LOCATION</scope>
    <scope>INDUCTION</scope>
    <scope>MUTAGENESIS OF GLU-15</scope>
    <source>
        <strain>ATCC 17978 / DSM 105126 / CIP 53.77 / LMG 1025 / NCDC KC755 / 5377</strain>
    </source>
</reference>
<reference key="3">
    <citation type="journal article" date="2015" name="MBio">
        <title>Homologs of the Acinetobacter baumannii AceI transporter represent a new family of bacterial multidrug efflux systems.</title>
        <authorList>
            <person name="Hassan K.A."/>
            <person name="Liu Q."/>
            <person name="Henderson P.J."/>
            <person name="Paulsen I.T."/>
        </authorList>
    </citation>
    <scope>FUNCTION</scope>
    <scope>NOMENCLATURE</scope>
    <scope>GENE FAMILY</scope>
</reference>
<reference key="4">
    <citation type="journal article" date="2015" name="Front. Microbiol.">
        <title>An ace up their sleeve: a transcriptomic approach exposes the AceI efflux protein of Acinetobacter baumannii and reveals the drug efflux potential hidden in many microbial pathogens.</title>
        <authorList>
            <person name="Hassan K.A."/>
            <person name="Elbourne L.D."/>
            <person name="Li L."/>
            <person name="Gamage H.K."/>
            <person name="Liu Q."/>
            <person name="Jackson S.M."/>
            <person name="Sharples D."/>
            <person name="Kolstoe A.B."/>
            <person name="Henderson P.J."/>
            <person name="Paulsen I.T."/>
        </authorList>
    </citation>
    <scope>NOMENCLATURE</scope>
    <scope>GENE FAMILY</scope>
</reference>
<reference key="5">
    <citation type="journal article" date="2018" name="J. Antimicrob. Chemother.">
        <title>Regulation of the aceI multidrug efflux pump gene in Acinetobacter baumannii.</title>
        <authorList>
            <person name="Liu Q."/>
            <person name="Hassan K.A."/>
            <person name="Ashwood H.E."/>
            <person name="Gamage H.K.A.H."/>
            <person name="Li L."/>
            <person name="Mabbutt B.C."/>
            <person name="Paulsen I.T."/>
        </authorList>
    </citation>
    <scope>INDUCTION</scope>
    <scope>DISRUPTION PHENOTYPE</scope>
    <source>
        <strain>ATCC 17978 / DSM 105126 / CIP 53.77 / LMG 1025 / NCDC KC755 / 5377</strain>
    </source>
</reference>
<reference key="6">
    <citation type="journal article" date="2019" name="Proc. Natl. Acad. Sci. U.S.A.">
        <title>Short-chain diamines are the physiological substrates of PACE family efflux pumps.</title>
        <authorList>
            <person name="Hassan K.A."/>
            <person name="Naidu V."/>
            <person name="Edgerton J.R."/>
            <person name="Mettrick K.A."/>
            <person name="Liu Q."/>
            <person name="Fahmy L."/>
            <person name="Li L."/>
            <person name="Jackson S.M."/>
            <person name="Ahmad I."/>
            <person name="Sharples D."/>
            <person name="Henderson P.J.F."/>
            <person name="Paulsen I.T."/>
        </authorList>
    </citation>
    <scope>FUNCTION</scope>
    <scope>ACTIVITY REGULATION</scope>
    <scope>BIOPHYSICOCHEMICAL PROPERTIES</scope>
    <scope>INDUCTION</scope>
    <scope>DISRUPTION PHENOTYPE</scope>
    <scope>MUTAGENESIS OF GLU-15</scope>
</reference>
<reference key="7">
    <citation type="journal article" date="2020" name="Proc. Natl. Acad. Sci. U.S.A.">
        <title>Assembly and regulation of the chlorhexidine-specific efflux pump AceI.</title>
        <authorList>
            <person name="Bolla J.R."/>
            <person name="Howes A.C."/>
            <person name="Fiorentino F."/>
            <person name="Robinson C.V."/>
        </authorList>
    </citation>
    <scope>ACTIVITY REGULATION</scope>
    <scope>SUBUNIT</scope>
    <scope>INDUCTION</scope>
    <scope>MUTAGENESIS OF GLU-15</scope>
</reference>
<keyword id="KW-0050">Antiport</keyword>
<keyword id="KW-0997">Cell inner membrane</keyword>
<keyword id="KW-1003">Cell membrane</keyword>
<keyword id="KW-0472">Membrane</keyword>
<keyword id="KW-0346">Stress response</keyword>
<keyword id="KW-0812">Transmembrane</keyword>
<keyword id="KW-1133">Transmembrane helix</keyword>
<keyword id="KW-0813">Transport</keyword>
<comment type="function">
    <text evidence="2 3 5">Mediates the efflux of short-chain diamines when energized by an electrochemical gradient (PubMed:31416917). Recognizes specifically the short-chain diamines cadaverine and putrescine as substrates, and promotes the active transport of these substrates in exchange for a cation (PubMed:31416917). Protons are probably the primary source of energy for transport, however it was not possible to conclude with complete certainty that protons, rather than alternative cations such as Na(+) ions, are exchanged for substrates by AceI (PubMed:31416917). In addition, is involved in resistance to the synthetic biocide chlorhexidine, a widely used antiseptic and disinfectant in both hospital and community settings (PubMed:24277845, PubMed:25670776). Interacts directly with chlorhexidine and mediates its efflux via an energy-dependent mechanism (PubMed:24277845).</text>
</comment>
<comment type="activity regulation">
    <text evidence="5 6">Protonation/deprotonation of Glu-15 may play an important role in transporter function (PubMed:32636271). Cadaverin transport is inhibited in the presence of CCCP (PubMed:31416917).</text>
</comment>
<comment type="biophysicochemical properties">
    <kinetics>
        <KM evidence="5">2.65 mM for cadaverine</KM>
    </kinetics>
</comment>
<comment type="subunit">
    <text evidence="6">Exists in a monomer-homodimer equilibrium. The dimer is probably the functional form of the protein, and the assembly of the dimer is mediated by binding of chlorhexidine and promoted by high pH conditions.</text>
</comment>
<comment type="subcellular location">
    <subcellularLocation>
        <location evidence="2">Cell inner membrane</location>
        <topology evidence="1">Multi-pass membrane protein</topology>
    </subcellularLocation>
</comment>
<comment type="induction">
    <text evidence="2 4 5 6">Transcriptionally regulated by the AceR regulator (PubMed:29481596, PubMed:32636271). Strongly induced by the short-chain diamines cadaverine and putrescine. Only moderately induced by the triamine spermidine and weakly induced by the tetraamine spermine (PubMed:31416917). Expression is also induced by more than 10-fold in response to chlorhexidine exposure (PubMed:24277845, PubMed:29481596).</text>
</comment>
<comment type="disruption phenotype">
    <text evidence="4 5">Inactivation of the gene results in at least 8-fold reduction in tolerance to cadaverine and putrescine but no change in tolerance to spermidine or spermine (PubMed:31416917). Deletion mutant also shows decreased chlorhexidine resistance (PubMed:29481596).</text>
</comment>
<comment type="similarity">
    <text evidence="9 10">Belongs to the proteobacterial antimicrobial compound efflux (PACE) (TC 2.A.117) family.</text>
</comment>
<comment type="sequence caution" evidence="8">
    <conflict type="erroneous initiation">
        <sequence resource="EMBL-CDS" id="ABO12490"/>
    </conflict>
    <text>Extended N-terminus.</text>
</comment>
<protein>
    <recommendedName>
        <fullName evidence="8">Short-chain diamines transporter</fullName>
    </recommendedName>
    <alternativeName>
        <fullName evidence="7">Acinetobacter chlorhexidine efflux protein I</fullName>
    </alternativeName>
</protein>
<dbReference type="EMBL" id="CP000521">
    <property type="protein sequence ID" value="ABO12490.2"/>
    <property type="status" value="ALT_INIT"/>
    <property type="molecule type" value="Genomic_DNA"/>
</dbReference>
<dbReference type="RefSeq" id="WP_005135057.1">
    <property type="nucleotide sequence ID" value="NZ_CP053098.1"/>
</dbReference>
<dbReference type="SMR" id="P0DUT9"/>
<dbReference type="KEGG" id="acb:A1S_2063"/>
<dbReference type="GO" id="GO:0005886">
    <property type="term" value="C:plasma membrane"/>
    <property type="evidence" value="ECO:0007669"/>
    <property type="project" value="UniProtKB-SubCell"/>
</dbReference>
<dbReference type="GO" id="GO:0015297">
    <property type="term" value="F:antiporter activity"/>
    <property type="evidence" value="ECO:0007669"/>
    <property type="project" value="UniProtKB-KW"/>
</dbReference>
<dbReference type="InterPro" id="IPR007896">
    <property type="entry name" value="BTP_bacteria"/>
</dbReference>
<dbReference type="NCBIfam" id="NF033663">
    <property type="entry name" value="AceI_fam_PACE"/>
    <property type="match status" value="1"/>
</dbReference>
<dbReference type="NCBIfam" id="NF033664">
    <property type="entry name" value="PACE_transport"/>
    <property type="match status" value="1"/>
</dbReference>
<dbReference type="Pfam" id="PF05232">
    <property type="entry name" value="BTP"/>
    <property type="match status" value="2"/>
</dbReference>
<evidence type="ECO:0000255" key="1"/>
<evidence type="ECO:0000269" key="2">
    <source>
    </source>
</evidence>
<evidence type="ECO:0000269" key="3">
    <source>
    </source>
</evidence>
<evidence type="ECO:0000269" key="4">
    <source>
    </source>
</evidence>
<evidence type="ECO:0000269" key="5">
    <source>
    </source>
</evidence>
<evidence type="ECO:0000269" key="6">
    <source>
    </source>
</evidence>
<evidence type="ECO:0000303" key="7">
    <source>
    </source>
</evidence>
<evidence type="ECO:0000305" key="8"/>
<evidence type="ECO:0000305" key="9">
    <source>
    </source>
</evidence>
<evidence type="ECO:0000305" key="10">
    <source>
    </source>
</evidence>
<evidence type="ECO:0000312" key="11">
    <source>
        <dbReference type="EMBL" id="ABO12490.2"/>
    </source>
</evidence>
<sequence>MLISKRRLIHAISYEGILLVIIAIALSFIFNMPMEVTGTLGVFMAVVSVFWNMIFNHYFEKVEHKYNWERTIPVRILHAIGFEGGLLIATVPMIAYMMQMTVIDAFILDIGLTLCILVYTFIFQWCYDHIEDKFFPNAKAASLH</sequence>
<name>PACE_ACIBT</name>
<organism>
    <name type="scientific">Acinetobacter baumannii (strain ATCC 17978 / DSM 105126 / CIP 53.77 / LMG 1025 / NCDC KC755 / 5377)</name>
    <dbReference type="NCBI Taxonomy" id="400667"/>
    <lineage>
        <taxon>Bacteria</taxon>
        <taxon>Pseudomonadati</taxon>
        <taxon>Pseudomonadota</taxon>
        <taxon>Gammaproteobacteria</taxon>
        <taxon>Moraxellales</taxon>
        <taxon>Moraxellaceae</taxon>
        <taxon>Acinetobacter</taxon>
        <taxon>Acinetobacter calcoaceticus/baumannii complex</taxon>
    </lineage>
</organism>
<feature type="chain" id="PRO_0000453611" description="Short-chain diamines transporter">
    <location>
        <begin position="1"/>
        <end position="144"/>
    </location>
</feature>
<feature type="transmembrane region" description="Helical" evidence="1">
    <location>
        <begin position="9"/>
        <end position="29"/>
    </location>
</feature>
<feature type="transmembrane region" description="Helical" evidence="1">
    <location>
        <begin position="35"/>
        <end position="55"/>
    </location>
</feature>
<feature type="transmembrane region" description="Helical" evidence="1">
    <location>
        <begin position="76"/>
        <end position="96"/>
    </location>
</feature>
<feature type="transmembrane region" description="Helical" evidence="1">
    <location>
        <begin position="103"/>
        <end position="123"/>
    </location>
</feature>
<feature type="mutagenesis site" description="Loss of activity. Mutant accumulates cadaverine. Retains affinity for chlorhexidine, but does not confer resistance to chlorhexidine. Favors the monomeric form at both low pH and high pH." evidence="2 5 6">
    <original>E</original>
    <variation>Q</variation>
    <location>
        <position position="15"/>
    </location>
</feature>
<proteinExistence type="evidence at protein level"/>